<protein>
    <recommendedName>
        <fullName evidence="1">ATP-dependent helicase/nuclease subunit A</fullName>
        <ecNumber evidence="1">3.1.-.-</ecNumber>
        <ecNumber evidence="1">5.6.2.4</ecNumber>
    </recommendedName>
    <alternativeName>
        <fullName evidence="1">ATP-dependent helicase/nuclease AddA</fullName>
    </alternativeName>
    <alternativeName>
        <fullName evidence="1">DNA 3'-5' helicase AddA</fullName>
    </alternativeName>
</protein>
<sequence length="1243" mass="144384">MVNWTKEQEEAIYTSGSDILVAAAAGSGKTAVLVERIIQKLLAEHNPTNIDALLVVTFTNAAAQEMRNRVGAALEQALAANPSSIHLKKQLSLLQRASISTLHSFCLDIVKKNAYILDIDPSFRIADDMEMDLLKQEVLDDLLEEWYGDSNPNQDSFFEVVNRFTSDRSDAEMEELIRSLHTFAMQSPWPNQWLDKLVQTYNIPEEWTEEELPWMNVLRDEVSRQLDAVSQEIDIAYSITQEADGPYHYAKTIEEEKAIIQEALKNMESWKYLQQSMLQVKFGKLSGKKVDCDEEKKTKVKKLRDSYKKRFQKMQEVWFARNLDAHVYDMRVLAPVIKHLVELVKQFQDSFAKVKKEKAVVDFSDLEHYCLQILIDESSTEEEVIPSTVAMQLQRQFTEVLVDEYQDTNMVQETILQLISDRQGSGNMFMVGDVKQSIYRFRHAEPSLFIDKYKRFSNSDDPSIRIDLARNFRSRENVLLGANYIFRQLFDEDLGEISYDDAAELIYGNKMYDDHPLEAKPELLLIDNNSEDVEQSDNEETVEDLEKAQIEARAYAKQIKNWIGTPEDEIPMQVVDKATGKQRDLQYKDIVILMRSMTWASTIADELQQQGIPTYADLSTGYFEAIEIKVMLSFLKVIDNPRQDIPLASILRSPIIGLEEDQLASIRLADRKASFYEAVQRYLQNEQDNSDTVKSLIRFMEMLNDFRQSARQGSLSELIWDIYRETGYYDFVGAIPGGKQRQANLRALYDRARGYESTSFRGLYRFLRFIERMEERGKDLGAARALSEQEDVVRIMTIHKSKGLEFPIVILGGMNKEFNQRDLSEKYLLHKDLGFASKYIDPVKRIQYPTLYYHAVRQAKFRDMLSEEIRVLYVALTRAKEKLLMVGTVPSIEKKLEKWQRIVDHPSWVLPAYFRMESKTYLDWVGPALLRHVGSEKIRTENIGNQVLESINQDPSDWQITMNHALDYMDMKDSSMDNDDNLKEKVFNWESVETEQEGLKNDVDARLSYEYAYKQATVFRAKQSVTELKRQQEVKDDYSDQQILPPSHGPIGKRPNFLQKKLKLSPAEKGTALHTVMQHLPMTHVLSEPEIEENIEKMVLEEKLTRMEADSINIRAVERFFHTEIASKIISGNDMHREVPFSIMLPASEVYANWKDQSNEKVLIQGVIDCLLQADTGWIILDYKTDFIEDNPTSQKEQELIHRYQTQMTLYRRAIEQIWKQPVEQTYLYFFSQQLLIEVPYRD</sequence>
<proteinExistence type="inferred from homology"/>
<accession>Q8ERW5</accession>
<gene>
    <name evidence="1" type="primary">addA</name>
    <name type="ordered locus">OB1182</name>
</gene>
<organism>
    <name type="scientific">Oceanobacillus iheyensis (strain DSM 14371 / CIP 107618 / JCM 11309 / KCTC 3954 / HTE831)</name>
    <dbReference type="NCBI Taxonomy" id="221109"/>
    <lineage>
        <taxon>Bacteria</taxon>
        <taxon>Bacillati</taxon>
        <taxon>Bacillota</taxon>
        <taxon>Bacilli</taxon>
        <taxon>Bacillales</taxon>
        <taxon>Bacillaceae</taxon>
        <taxon>Oceanobacillus</taxon>
    </lineage>
</organism>
<comment type="function">
    <text evidence="1">The heterodimer acts as both an ATP-dependent DNA helicase and an ATP-dependent, dual-direction single-stranded exonuclease. Recognizes the chi site generating a DNA molecule suitable for the initiation of homologous recombination. The AddA nuclease domain is required for chi fragment generation; this subunit has the helicase and 3' -&gt; 5' nuclease activities.</text>
</comment>
<comment type="catalytic activity">
    <reaction evidence="1">
        <text>Couples ATP hydrolysis with the unwinding of duplex DNA by translocating in the 3'-5' direction.</text>
        <dbReference type="EC" id="5.6.2.4"/>
    </reaction>
</comment>
<comment type="catalytic activity">
    <reaction evidence="1">
        <text>ATP + H2O = ADP + phosphate + H(+)</text>
        <dbReference type="Rhea" id="RHEA:13065"/>
        <dbReference type="ChEBI" id="CHEBI:15377"/>
        <dbReference type="ChEBI" id="CHEBI:15378"/>
        <dbReference type="ChEBI" id="CHEBI:30616"/>
        <dbReference type="ChEBI" id="CHEBI:43474"/>
        <dbReference type="ChEBI" id="CHEBI:456216"/>
        <dbReference type="EC" id="5.6.2.4"/>
    </reaction>
</comment>
<comment type="cofactor">
    <cofactor evidence="1">
        <name>Mg(2+)</name>
        <dbReference type="ChEBI" id="CHEBI:18420"/>
    </cofactor>
</comment>
<comment type="subunit">
    <text evidence="1">Heterodimer of AddA and AddB/RexB.</text>
</comment>
<comment type="similarity">
    <text evidence="1">Belongs to the helicase family. AddA subfamily.</text>
</comment>
<name>ADDA_OCEIH</name>
<evidence type="ECO:0000255" key="1">
    <source>
        <dbReference type="HAMAP-Rule" id="MF_01451"/>
    </source>
</evidence>
<keyword id="KW-0067">ATP-binding</keyword>
<keyword id="KW-0227">DNA damage</keyword>
<keyword id="KW-0234">DNA repair</keyword>
<keyword id="KW-0238">DNA-binding</keyword>
<keyword id="KW-0269">Exonuclease</keyword>
<keyword id="KW-0347">Helicase</keyword>
<keyword id="KW-0378">Hydrolase</keyword>
<keyword id="KW-0413">Isomerase</keyword>
<keyword id="KW-0540">Nuclease</keyword>
<keyword id="KW-0547">Nucleotide-binding</keyword>
<keyword id="KW-1185">Reference proteome</keyword>
<dbReference type="EC" id="3.1.-.-" evidence="1"/>
<dbReference type="EC" id="5.6.2.4" evidence="1"/>
<dbReference type="EMBL" id="BA000028">
    <property type="protein sequence ID" value="BAC13138.1"/>
    <property type="molecule type" value="Genomic_DNA"/>
</dbReference>
<dbReference type="RefSeq" id="WP_011065581.1">
    <property type="nucleotide sequence ID" value="NC_004193.1"/>
</dbReference>
<dbReference type="SMR" id="Q8ERW5"/>
<dbReference type="STRING" id="221109.gene:10733421"/>
<dbReference type="KEGG" id="oih:OB1182"/>
<dbReference type="eggNOG" id="COG1074">
    <property type="taxonomic scope" value="Bacteria"/>
</dbReference>
<dbReference type="HOGENOM" id="CLU_001114_3_1_9"/>
<dbReference type="OrthoDB" id="9810135at2"/>
<dbReference type="PhylomeDB" id="Q8ERW5"/>
<dbReference type="Proteomes" id="UP000000822">
    <property type="component" value="Chromosome"/>
</dbReference>
<dbReference type="GO" id="GO:0005829">
    <property type="term" value="C:cytosol"/>
    <property type="evidence" value="ECO:0007669"/>
    <property type="project" value="TreeGrafter"/>
</dbReference>
<dbReference type="GO" id="GO:0033202">
    <property type="term" value="C:DNA helicase complex"/>
    <property type="evidence" value="ECO:0007669"/>
    <property type="project" value="TreeGrafter"/>
</dbReference>
<dbReference type="GO" id="GO:0043138">
    <property type="term" value="F:3'-5' DNA helicase activity"/>
    <property type="evidence" value="ECO:0007669"/>
    <property type="project" value="UniProtKB-UniRule"/>
</dbReference>
<dbReference type="GO" id="GO:0008408">
    <property type="term" value="F:3'-5' exonuclease activity"/>
    <property type="evidence" value="ECO:0007669"/>
    <property type="project" value="UniProtKB-UniRule"/>
</dbReference>
<dbReference type="GO" id="GO:0005524">
    <property type="term" value="F:ATP binding"/>
    <property type="evidence" value="ECO:0007669"/>
    <property type="project" value="UniProtKB-UniRule"/>
</dbReference>
<dbReference type="GO" id="GO:0016887">
    <property type="term" value="F:ATP hydrolysis activity"/>
    <property type="evidence" value="ECO:0007669"/>
    <property type="project" value="RHEA"/>
</dbReference>
<dbReference type="GO" id="GO:0003690">
    <property type="term" value="F:double-stranded DNA binding"/>
    <property type="evidence" value="ECO:0007669"/>
    <property type="project" value="UniProtKB-UniRule"/>
</dbReference>
<dbReference type="GO" id="GO:0000724">
    <property type="term" value="P:double-strand break repair via homologous recombination"/>
    <property type="evidence" value="ECO:0007669"/>
    <property type="project" value="UniProtKB-UniRule"/>
</dbReference>
<dbReference type="FunFam" id="3.40.50.300:FF:001236">
    <property type="entry name" value="ATP-dependent helicase/nuclease subunit A"/>
    <property type="match status" value="1"/>
</dbReference>
<dbReference type="Gene3D" id="3.90.320.10">
    <property type="match status" value="1"/>
</dbReference>
<dbReference type="Gene3D" id="3.40.50.300">
    <property type="entry name" value="P-loop containing nucleotide triphosphate hydrolases"/>
    <property type="match status" value="4"/>
</dbReference>
<dbReference type="HAMAP" id="MF_01451">
    <property type="entry name" value="AddA"/>
    <property type="match status" value="1"/>
</dbReference>
<dbReference type="InterPro" id="IPR014152">
    <property type="entry name" value="AddA"/>
</dbReference>
<dbReference type="InterPro" id="IPR014017">
    <property type="entry name" value="DNA_helicase_UvrD-like_C"/>
</dbReference>
<dbReference type="InterPro" id="IPR000212">
    <property type="entry name" value="DNA_helicase_UvrD/REP"/>
</dbReference>
<dbReference type="InterPro" id="IPR027417">
    <property type="entry name" value="P-loop_NTPase"/>
</dbReference>
<dbReference type="InterPro" id="IPR011604">
    <property type="entry name" value="PDDEXK-like_dom_sf"/>
</dbReference>
<dbReference type="InterPro" id="IPR038726">
    <property type="entry name" value="PDDEXK_AddAB-type"/>
</dbReference>
<dbReference type="InterPro" id="IPR011335">
    <property type="entry name" value="Restrct_endonuc-II-like"/>
</dbReference>
<dbReference type="InterPro" id="IPR014016">
    <property type="entry name" value="UvrD-like_ATP-bd"/>
</dbReference>
<dbReference type="NCBIfam" id="TIGR02785">
    <property type="entry name" value="addA_Gpos"/>
    <property type="match status" value="1"/>
</dbReference>
<dbReference type="PANTHER" id="PTHR11070:SF48">
    <property type="entry name" value="ATP-DEPENDENT HELICASE_NUCLEASE SUBUNIT A"/>
    <property type="match status" value="1"/>
</dbReference>
<dbReference type="PANTHER" id="PTHR11070">
    <property type="entry name" value="UVRD / RECB / PCRA DNA HELICASE FAMILY MEMBER"/>
    <property type="match status" value="1"/>
</dbReference>
<dbReference type="Pfam" id="PF12705">
    <property type="entry name" value="PDDEXK_1"/>
    <property type="match status" value="1"/>
</dbReference>
<dbReference type="Pfam" id="PF00580">
    <property type="entry name" value="UvrD-helicase"/>
    <property type="match status" value="1"/>
</dbReference>
<dbReference type="Pfam" id="PF13361">
    <property type="entry name" value="UvrD_C"/>
    <property type="match status" value="1"/>
</dbReference>
<dbReference type="SUPFAM" id="SSF52540">
    <property type="entry name" value="P-loop containing nucleoside triphosphate hydrolases"/>
    <property type="match status" value="1"/>
</dbReference>
<dbReference type="SUPFAM" id="SSF52980">
    <property type="entry name" value="Restriction endonuclease-like"/>
    <property type="match status" value="1"/>
</dbReference>
<dbReference type="PROSITE" id="PS51198">
    <property type="entry name" value="UVRD_HELICASE_ATP_BIND"/>
    <property type="match status" value="1"/>
</dbReference>
<dbReference type="PROSITE" id="PS51217">
    <property type="entry name" value="UVRD_HELICASE_CTER"/>
    <property type="match status" value="1"/>
</dbReference>
<feature type="chain" id="PRO_0000379303" description="ATP-dependent helicase/nuclease subunit A">
    <location>
        <begin position="1"/>
        <end position="1243"/>
    </location>
</feature>
<feature type="domain" description="UvrD-like helicase ATP-binding" evidence="1">
    <location>
        <begin position="2"/>
        <end position="475"/>
    </location>
</feature>
<feature type="domain" description="UvrD-like helicase C-terminal" evidence="1">
    <location>
        <begin position="502"/>
        <end position="803"/>
    </location>
</feature>
<feature type="binding site" evidence="1">
    <location>
        <begin position="23"/>
        <end position="30"/>
    </location>
    <ligand>
        <name>ATP</name>
        <dbReference type="ChEBI" id="CHEBI:30616"/>
    </ligand>
</feature>
<reference key="1">
    <citation type="journal article" date="2002" name="Nucleic Acids Res.">
        <title>Genome sequence of Oceanobacillus iheyensis isolated from the Iheya Ridge and its unexpected adaptive capabilities to extreme environments.</title>
        <authorList>
            <person name="Takami H."/>
            <person name="Takaki Y."/>
            <person name="Uchiyama I."/>
        </authorList>
    </citation>
    <scope>NUCLEOTIDE SEQUENCE [LARGE SCALE GENOMIC DNA]</scope>
    <source>
        <strain>DSM 14371 / CIP 107618 / JCM 11309 / KCTC 3954 / HTE831</strain>
    </source>
</reference>